<organism>
    <name type="scientific">Sambucus nigra</name>
    <name type="common">European elder</name>
    <dbReference type="NCBI Taxonomy" id="4202"/>
    <lineage>
        <taxon>Eukaryota</taxon>
        <taxon>Viridiplantae</taxon>
        <taxon>Streptophyta</taxon>
        <taxon>Embryophyta</taxon>
        <taxon>Tracheophyta</taxon>
        <taxon>Spermatophyta</taxon>
        <taxon>Magnoliopsida</taxon>
        <taxon>eudicotyledons</taxon>
        <taxon>Gunneridae</taxon>
        <taxon>Pentapetalae</taxon>
        <taxon>asterids</taxon>
        <taxon>campanulids</taxon>
        <taxon>Dipsacales</taxon>
        <taxon>Adoxaceae</taxon>
        <taxon>Sambucus</taxon>
    </lineage>
</organism>
<protein>
    <recommendedName>
        <fullName>Cytochrome c</fullName>
    </recommendedName>
</protein>
<reference key="1">
    <citation type="journal article" date="1974" name="Biochem. J.">
        <title>The amino acid sequences of cytochrome c from four plant sources.</title>
        <authorList>
            <person name="Brown R.H."/>
            <person name="Boulter D."/>
        </authorList>
    </citation>
    <scope>PROTEIN SEQUENCE</scope>
    <scope>ACETYLATION AT ALA-1</scope>
    <scope>METHYLATION AT LYS-80 AND LYS-94</scope>
</reference>
<accession>P00062</accession>
<evidence type="ECO:0000269" key="1">
    <source>
    </source>
</evidence>
<evidence type="ECO:0000305" key="2"/>
<comment type="function">
    <text>Electron carrier protein. The oxidized form of the cytochrome c heme group can accept an electron from the heme group of the cytochrome c1 subunit of cytochrome reductase. Cytochrome c then transfers this electron to the cytochrome oxidase complex, the final protein carrier in the mitochondrial electron-transport chain.</text>
</comment>
<comment type="subcellular location">
    <subcellularLocation>
        <location>Mitochondrion intermembrane space</location>
    </subcellularLocation>
    <text>Loosely associated with the inner membrane.</text>
</comment>
<comment type="PTM">
    <text>Binds 1 heme c group covalently per subunit.</text>
</comment>
<comment type="similarity">
    <text evidence="2">Belongs to the cytochrome c family.</text>
</comment>
<comment type="online information" name="Protein Spotlight">
    <link uri="https://www.proteinspotlight.org/back_issues/076"/>
    <text>Life shuttle - Issue 76 of November 2006</text>
</comment>
<name>CYC_SAMNI</name>
<feature type="chain" id="PRO_0000108307" description="Cytochrome c">
    <location>
        <begin position="1"/>
        <end position="111"/>
    </location>
</feature>
<feature type="binding site" description="covalent">
    <location>
        <position position="22"/>
    </location>
    <ligand>
        <name>heme c</name>
        <dbReference type="ChEBI" id="CHEBI:61717"/>
    </ligand>
</feature>
<feature type="binding site" description="covalent">
    <location>
        <position position="25"/>
    </location>
    <ligand>
        <name>heme c</name>
        <dbReference type="ChEBI" id="CHEBI:61717"/>
    </ligand>
</feature>
<feature type="binding site" description="axial binding residue">
    <location>
        <position position="26"/>
    </location>
    <ligand>
        <name>heme c</name>
        <dbReference type="ChEBI" id="CHEBI:61717"/>
    </ligand>
    <ligandPart>
        <name>Fe</name>
        <dbReference type="ChEBI" id="CHEBI:18248"/>
    </ligandPart>
</feature>
<feature type="binding site" description="axial binding residue">
    <location>
        <position position="88"/>
    </location>
    <ligand>
        <name>heme c</name>
        <dbReference type="ChEBI" id="CHEBI:61717"/>
    </ligand>
    <ligandPart>
        <name>Fe</name>
        <dbReference type="ChEBI" id="CHEBI:18248"/>
    </ligandPart>
</feature>
<feature type="modified residue" description="N-acetylalanine" evidence="1">
    <location>
        <position position="1"/>
    </location>
</feature>
<feature type="modified residue" description="N6,N6,N6-trimethyllysine" evidence="1">
    <location>
        <position position="80"/>
    </location>
</feature>
<feature type="modified residue" description="N6,N6,N6-trimethyllysine" evidence="1">
    <location>
        <position position="94"/>
    </location>
</feature>
<keyword id="KW-0007">Acetylation</keyword>
<keyword id="KW-0903">Direct protein sequencing</keyword>
<keyword id="KW-0249">Electron transport</keyword>
<keyword id="KW-0349">Heme</keyword>
<keyword id="KW-0408">Iron</keyword>
<keyword id="KW-0479">Metal-binding</keyword>
<keyword id="KW-0488">Methylation</keyword>
<keyword id="KW-0496">Mitochondrion</keyword>
<keyword id="KW-0679">Respiratory chain</keyword>
<keyword id="KW-0813">Transport</keyword>
<proteinExistence type="evidence at protein level"/>
<dbReference type="PIR" id="A00054">
    <property type="entry name" value="CCED"/>
</dbReference>
<dbReference type="SMR" id="P00062"/>
<dbReference type="iPTMnet" id="P00062"/>
<dbReference type="GO" id="GO:0005758">
    <property type="term" value="C:mitochondrial intermembrane space"/>
    <property type="evidence" value="ECO:0007669"/>
    <property type="project" value="UniProtKB-SubCell"/>
</dbReference>
<dbReference type="GO" id="GO:0009055">
    <property type="term" value="F:electron transfer activity"/>
    <property type="evidence" value="ECO:0007669"/>
    <property type="project" value="InterPro"/>
</dbReference>
<dbReference type="GO" id="GO:0020037">
    <property type="term" value="F:heme binding"/>
    <property type="evidence" value="ECO:0007669"/>
    <property type="project" value="InterPro"/>
</dbReference>
<dbReference type="GO" id="GO:0046872">
    <property type="term" value="F:metal ion binding"/>
    <property type="evidence" value="ECO:0007669"/>
    <property type="project" value="UniProtKB-KW"/>
</dbReference>
<dbReference type="FunFam" id="1.10.760.10:FF:000001">
    <property type="entry name" value="Cytochrome c iso-1"/>
    <property type="match status" value="1"/>
</dbReference>
<dbReference type="Gene3D" id="1.10.760.10">
    <property type="entry name" value="Cytochrome c-like domain"/>
    <property type="match status" value="1"/>
</dbReference>
<dbReference type="InterPro" id="IPR009056">
    <property type="entry name" value="Cyt_c-like_dom"/>
</dbReference>
<dbReference type="InterPro" id="IPR036909">
    <property type="entry name" value="Cyt_c-like_dom_sf"/>
</dbReference>
<dbReference type="InterPro" id="IPR002327">
    <property type="entry name" value="Cyt_c_1A/1B"/>
</dbReference>
<dbReference type="PANTHER" id="PTHR11961">
    <property type="entry name" value="CYTOCHROME C"/>
    <property type="match status" value="1"/>
</dbReference>
<dbReference type="Pfam" id="PF00034">
    <property type="entry name" value="Cytochrom_C"/>
    <property type="match status" value="1"/>
</dbReference>
<dbReference type="PRINTS" id="PR00604">
    <property type="entry name" value="CYTCHRMECIAB"/>
</dbReference>
<dbReference type="SUPFAM" id="SSF46626">
    <property type="entry name" value="Cytochrome c"/>
    <property type="match status" value="1"/>
</dbReference>
<dbReference type="PROSITE" id="PS51007">
    <property type="entry name" value="CYTC"/>
    <property type="match status" value="1"/>
</dbReference>
<sequence>ASFAEAPPGNPKAGEKIFKTKCNQCHTVDKGAGHKQGPNLNGLFGRQSGTTAGYSYSAANKNMAVNWEEKTLYDYLLNPKKYIPGTKMVFPGLKKPQDRADLIAYLKQSTA</sequence>